<sequence>MEKMRVVLITLLLFIGAAVAEKAGNGKAANNPAEDASDGEHNLVEEAGGIGDAITPAEGKALISAYESARFKKFVTHCSSHVAQTCSGNDPLHASGRCHGINVPLGLSFCLFDSMEKCLGDHEAKLIDPNPGPMSAIPNSIQSQQLLIETVKFRTVLKTCTRVSAKFCLSAPNVDTSVLPACLGPSLNQCVYPAADAFTPGPPLELPPIIIMN</sequence>
<feature type="signal peptide" evidence="1">
    <location>
        <begin position="1"/>
        <end position="20"/>
    </location>
</feature>
<feature type="chain" id="PRO_0000019790" description="Nodulin-27">
    <location>
        <begin position="21"/>
        <end position="213"/>
    </location>
</feature>
<evidence type="ECO:0000255" key="1"/>
<evidence type="ECO:0000305" key="2"/>
<accession>P08864</accession>
<keyword id="KW-0536">Nodulation</keyword>
<keyword id="KW-1185">Reference proteome</keyword>
<keyword id="KW-0732">Signal</keyword>
<organism>
    <name type="scientific">Glycine max</name>
    <name type="common">Soybean</name>
    <name type="synonym">Glycine hispida</name>
    <dbReference type="NCBI Taxonomy" id="3847"/>
    <lineage>
        <taxon>Eukaryota</taxon>
        <taxon>Viridiplantae</taxon>
        <taxon>Streptophyta</taxon>
        <taxon>Embryophyta</taxon>
        <taxon>Tracheophyta</taxon>
        <taxon>Spermatophyta</taxon>
        <taxon>Magnoliopsida</taxon>
        <taxon>eudicotyledons</taxon>
        <taxon>Gunneridae</taxon>
        <taxon>Pentapetalae</taxon>
        <taxon>rosids</taxon>
        <taxon>fabids</taxon>
        <taxon>Fabales</taxon>
        <taxon>Fabaceae</taxon>
        <taxon>Papilionoideae</taxon>
        <taxon>50 kb inversion clade</taxon>
        <taxon>NPAAA clade</taxon>
        <taxon>indigoferoid/millettioid clade</taxon>
        <taxon>Phaseoleae</taxon>
        <taxon>Glycine</taxon>
        <taxon>Glycine subgen. Soja</taxon>
    </lineage>
</organism>
<comment type="induction">
    <text>During nodulation in legume roots after Rhizobium infection.</text>
</comment>
<comment type="similarity">
    <text evidence="2">Belongs to the nodulin 20 family.</text>
</comment>
<comment type="caution">
    <text evidence="2">It is uncertain whether Met-1 or Met-4 is the initiator.</text>
</comment>
<name>NO27_SOYBN</name>
<proteinExistence type="evidence at transcript level"/>
<protein>
    <recommendedName>
        <fullName>Nodulin-27</fullName>
        <shortName>N-27</shortName>
    </recommendedName>
</protein>
<dbReference type="EMBL" id="X05091">
    <property type="protein sequence ID" value="CAA28742.1"/>
    <property type="molecule type" value="mRNA"/>
</dbReference>
<dbReference type="PIR" id="A25750">
    <property type="entry name" value="A25750"/>
</dbReference>
<dbReference type="RefSeq" id="NP_001235023.1">
    <property type="nucleotide sequence ID" value="NM_001248094.1"/>
</dbReference>
<dbReference type="STRING" id="3847.P08864"/>
<dbReference type="GeneID" id="100527294"/>
<dbReference type="InParanoid" id="P08864"/>
<dbReference type="Proteomes" id="UP000008827">
    <property type="component" value="Unplaced"/>
</dbReference>
<dbReference type="GO" id="GO:0009877">
    <property type="term" value="P:nodulation"/>
    <property type="evidence" value="ECO:0007669"/>
    <property type="project" value="UniProtKB-KW"/>
</dbReference>
<dbReference type="InterPro" id="IPR003387">
    <property type="entry name" value="Nodulin"/>
</dbReference>
<dbReference type="Pfam" id="PF02451">
    <property type="entry name" value="Nodulin"/>
    <property type="match status" value="2"/>
</dbReference>
<reference key="1">
    <citation type="journal article" date="1987" name="Nucleic Acids Res.">
        <title>Several nodulins of soybean share structural domains but differ in their subcellular locations.</title>
        <authorList>
            <person name="Jacobs F.A."/>
            <person name="Zhang M."/>
            <person name="Fortin M.G."/>
            <person name="Verma D.P.S."/>
        </authorList>
    </citation>
    <scope>NUCLEOTIDE SEQUENCE [MRNA]</scope>
    <source>
        <strain>cv. Prize</strain>
    </source>
</reference>